<accession>C6DII8</accession>
<dbReference type="EC" id="6.1.1.14" evidence="1"/>
<dbReference type="EMBL" id="CP001657">
    <property type="protein sequence ID" value="ACT15182.1"/>
    <property type="molecule type" value="Genomic_DNA"/>
</dbReference>
<dbReference type="RefSeq" id="WP_010286428.1">
    <property type="nucleotide sequence ID" value="NC_012917.1"/>
</dbReference>
<dbReference type="SMR" id="C6DII8"/>
<dbReference type="STRING" id="561230.PC1_4168"/>
<dbReference type="GeneID" id="90765467"/>
<dbReference type="KEGG" id="pct:PC1_4168"/>
<dbReference type="eggNOG" id="COG0752">
    <property type="taxonomic scope" value="Bacteria"/>
</dbReference>
<dbReference type="HOGENOM" id="CLU_057066_1_0_6"/>
<dbReference type="OrthoDB" id="9802183at2"/>
<dbReference type="Proteomes" id="UP000002736">
    <property type="component" value="Chromosome"/>
</dbReference>
<dbReference type="GO" id="GO:0005829">
    <property type="term" value="C:cytosol"/>
    <property type="evidence" value="ECO:0007669"/>
    <property type="project" value="TreeGrafter"/>
</dbReference>
<dbReference type="GO" id="GO:0005524">
    <property type="term" value="F:ATP binding"/>
    <property type="evidence" value="ECO:0007669"/>
    <property type="project" value="UniProtKB-UniRule"/>
</dbReference>
<dbReference type="GO" id="GO:0004820">
    <property type="term" value="F:glycine-tRNA ligase activity"/>
    <property type="evidence" value="ECO:0007669"/>
    <property type="project" value="UniProtKB-UniRule"/>
</dbReference>
<dbReference type="GO" id="GO:0006426">
    <property type="term" value="P:glycyl-tRNA aminoacylation"/>
    <property type="evidence" value="ECO:0007669"/>
    <property type="project" value="UniProtKB-UniRule"/>
</dbReference>
<dbReference type="CDD" id="cd00733">
    <property type="entry name" value="GlyRS_alpha_core"/>
    <property type="match status" value="1"/>
</dbReference>
<dbReference type="FunFam" id="1.20.58.180:FF:000001">
    <property type="entry name" value="Glycine--tRNA ligase alpha subunit"/>
    <property type="match status" value="1"/>
</dbReference>
<dbReference type="FunFam" id="3.30.930.10:FF:000006">
    <property type="entry name" value="Glycine--tRNA ligase alpha subunit"/>
    <property type="match status" value="1"/>
</dbReference>
<dbReference type="Gene3D" id="3.30.930.10">
    <property type="entry name" value="Bira Bifunctional Protein, Domain 2"/>
    <property type="match status" value="1"/>
</dbReference>
<dbReference type="Gene3D" id="1.20.58.180">
    <property type="entry name" value="Class II aaRS and biotin synthetases, domain 2"/>
    <property type="match status" value="1"/>
</dbReference>
<dbReference type="HAMAP" id="MF_00254">
    <property type="entry name" value="Gly_tRNA_synth_alpha"/>
    <property type="match status" value="1"/>
</dbReference>
<dbReference type="InterPro" id="IPR045864">
    <property type="entry name" value="aa-tRNA-synth_II/BPL/LPL"/>
</dbReference>
<dbReference type="InterPro" id="IPR006194">
    <property type="entry name" value="Gly-tRNA-synth_heterodimer"/>
</dbReference>
<dbReference type="InterPro" id="IPR002310">
    <property type="entry name" value="Gly-tRNA_ligase_asu"/>
</dbReference>
<dbReference type="NCBIfam" id="TIGR00388">
    <property type="entry name" value="glyQ"/>
    <property type="match status" value="1"/>
</dbReference>
<dbReference type="NCBIfam" id="NF006827">
    <property type="entry name" value="PRK09348.1"/>
    <property type="match status" value="1"/>
</dbReference>
<dbReference type="PANTHER" id="PTHR30075:SF2">
    <property type="entry name" value="GLYCINE--TRNA LIGASE, CHLOROPLASTIC_MITOCHONDRIAL 2"/>
    <property type="match status" value="1"/>
</dbReference>
<dbReference type="PANTHER" id="PTHR30075">
    <property type="entry name" value="GLYCYL-TRNA SYNTHETASE"/>
    <property type="match status" value="1"/>
</dbReference>
<dbReference type="Pfam" id="PF02091">
    <property type="entry name" value="tRNA-synt_2e"/>
    <property type="match status" value="1"/>
</dbReference>
<dbReference type="PRINTS" id="PR01044">
    <property type="entry name" value="TRNASYNTHGA"/>
</dbReference>
<dbReference type="SUPFAM" id="SSF55681">
    <property type="entry name" value="Class II aaRS and biotin synthetases"/>
    <property type="match status" value="1"/>
</dbReference>
<dbReference type="PROSITE" id="PS50861">
    <property type="entry name" value="AA_TRNA_LIGASE_II_GLYAB"/>
    <property type="match status" value="1"/>
</dbReference>
<name>SYGA_PECCP</name>
<keyword id="KW-0030">Aminoacyl-tRNA synthetase</keyword>
<keyword id="KW-0067">ATP-binding</keyword>
<keyword id="KW-0963">Cytoplasm</keyword>
<keyword id="KW-0436">Ligase</keyword>
<keyword id="KW-0547">Nucleotide-binding</keyword>
<keyword id="KW-0648">Protein biosynthesis</keyword>
<comment type="catalytic activity">
    <reaction evidence="1">
        <text>tRNA(Gly) + glycine + ATP = glycyl-tRNA(Gly) + AMP + diphosphate</text>
        <dbReference type="Rhea" id="RHEA:16013"/>
        <dbReference type="Rhea" id="RHEA-COMP:9664"/>
        <dbReference type="Rhea" id="RHEA-COMP:9683"/>
        <dbReference type="ChEBI" id="CHEBI:30616"/>
        <dbReference type="ChEBI" id="CHEBI:33019"/>
        <dbReference type="ChEBI" id="CHEBI:57305"/>
        <dbReference type="ChEBI" id="CHEBI:78442"/>
        <dbReference type="ChEBI" id="CHEBI:78522"/>
        <dbReference type="ChEBI" id="CHEBI:456215"/>
        <dbReference type="EC" id="6.1.1.14"/>
    </reaction>
</comment>
<comment type="subunit">
    <text evidence="1">Tetramer of two alpha and two beta subunits.</text>
</comment>
<comment type="subcellular location">
    <subcellularLocation>
        <location evidence="1">Cytoplasm</location>
    </subcellularLocation>
</comment>
<comment type="similarity">
    <text evidence="1">Belongs to the class-II aminoacyl-tRNA synthetase family.</text>
</comment>
<organism>
    <name type="scientific">Pectobacterium carotovorum subsp. carotovorum (strain PC1)</name>
    <dbReference type="NCBI Taxonomy" id="561230"/>
    <lineage>
        <taxon>Bacteria</taxon>
        <taxon>Pseudomonadati</taxon>
        <taxon>Pseudomonadota</taxon>
        <taxon>Gammaproteobacteria</taxon>
        <taxon>Enterobacterales</taxon>
        <taxon>Pectobacteriaceae</taxon>
        <taxon>Pectobacterium</taxon>
    </lineage>
</organism>
<feature type="chain" id="PRO_1000204591" description="Glycine--tRNA ligase alpha subunit">
    <location>
        <begin position="1"/>
        <end position="304"/>
    </location>
</feature>
<evidence type="ECO:0000255" key="1">
    <source>
        <dbReference type="HAMAP-Rule" id="MF_00254"/>
    </source>
</evidence>
<protein>
    <recommendedName>
        <fullName evidence="1">Glycine--tRNA ligase alpha subunit</fullName>
        <ecNumber evidence="1">6.1.1.14</ecNumber>
    </recommendedName>
    <alternativeName>
        <fullName evidence="1">Glycyl-tRNA synthetase alpha subunit</fullName>
        <shortName evidence="1">GlyRS</shortName>
    </alternativeName>
</protein>
<reference key="1">
    <citation type="submission" date="2009-07" db="EMBL/GenBank/DDBJ databases">
        <title>Complete sequence of Pectobacterium carotovorum subsp. carotovorum PC1.</title>
        <authorList>
            <consortium name="US DOE Joint Genome Institute"/>
            <person name="Lucas S."/>
            <person name="Copeland A."/>
            <person name="Lapidus A."/>
            <person name="Glavina del Rio T."/>
            <person name="Tice H."/>
            <person name="Bruce D."/>
            <person name="Goodwin L."/>
            <person name="Pitluck S."/>
            <person name="Munk A.C."/>
            <person name="Brettin T."/>
            <person name="Detter J.C."/>
            <person name="Han C."/>
            <person name="Tapia R."/>
            <person name="Larimer F."/>
            <person name="Land M."/>
            <person name="Hauser L."/>
            <person name="Kyrpides N."/>
            <person name="Mikhailova N."/>
            <person name="Balakrishnan V."/>
            <person name="Glasner J."/>
            <person name="Perna N.T."/>
        </authorList>
    </citation>
    <scope>NUCLEOTIDE SEQUENCE [LARGE SCALE GENOMIC DNA]</scope>
    <source>
        <strain>PC1</strain>
    </source>
</reference>
<proteinExistence type="inferred from homology"/>
<gene>
    <name evidence="1" type="primary">glyQ</name>
    <name type="ordered locus">PC1_4168</name>
</gene>
<sequence>MQKFDTKTFQGLILTLQDYWARQGCTIVQPLDMEVGAGTSHPMTCLRALGPEPMAAAYVQPSRRPTDGRYGENPNRLQHYYQFQVVIKPSPDNIQELYLGSLKELGMDPTIHDIRFVEDNWENPTLGAWGLGWEVWLNGMEVTQFTYFQQVGGLECKPVTGEITYGLERLAMYIQGVDSVYDLVWSDGPLGKTTYGDVFHQNEVEQSTYNFEHADVDFLFSCFEQYEKEAQHLLALEKPLPLPAYERILKAAHSFNLLDARKAISVTERQRYILRIRTLTKAVAEAYYASREALGFPMCNKKES</sequence>